<sequence>MYEYLDRRYALALYEVAEEKNKVEEYLNDLREICEIIYGNNELYEVIKHPQISTVRKKKTFRNIFEGKIDDELLSFLMVLIEKDRILYLREKLKEMEKIHLERNNTLLAEVKSVVPLTEDEVTRLVEKLENKYSKKILLKQEIDRSIIGGLYVRVGDDVIDGTVKSRLDDMKQIMLKRE</sequence>
<name>ATPD_CLOPS</name>
<feature type="chain" id="PRO_1000184680" description="ATP synthase subunit delta">
    <location>
        <begin position="1"/>
        <end position="179"/>
    </location>
</feature>
<protein>
    <recommendedName>
        <fullName evidence="1">ATP synthase subunit delta</fullName>
    </recommendedName>
    <alternativeName>
        <fullName evidence="1">ATP synthase F(1) sector subunit delta</fullName>
    </alternativeName>
    <alternativeName>
        <fullName evidence="1">F-type ATPase subunit delta</fullName>
        <shortName evidence="1">F-ATPase subunit delta</shortName>
    </alternativeName>
</protein>
<keyword id="KW-0066">ATP synthesis</keyword>
<keyword id="KW-1003">Cell membrane</keyword>
<keyword id="KW-0139">CF(1)</keyword>
<keyword id="KW-0375">Hydrogen ion transport</keyword>
<keyword id="KW-0406">Ion transport</keyword>
<keyword id="KW-0472">Membrane</keyword>
<keyword id="KW-0813">Transport</keyword>
<proteinExistence type="inferred from homology"/>
<gene>
    <name evidence="1" type="primary">atpH</name>
    <name type="ordered locus">CPR_2165</name>
</gene>
<reference key="1">
    <citation type="journal article" date="2006" name="Genome Res.">
        <title>Skewed genomic variability in strains of the toxigenic bacterial pathogen, Clostridium perfringens.</title>
        <authorList>
            <person name="Myers G.S.A."/>
            <person name="Rasko D.A."/>
            <person name="Cheung J.K."/>
            <person name="Ravel J."/>
            <person name="Seshadri R."/>
            <person name="DeBoy R.T."/>
            <person name="Ren Q."/>
            <person name="Varga J."/>
            <person name="Awad M.M."/>
            <person name="Brinkac L.M."/>
            <person name="Daugherty S.C."/>
            <person name="Haft D.H."/>
            <person name="Dodson R.J."/>
            <person name="Madupu R."/>
            <person name="Nelson W.C."/>
            <person name="Rosovitz M.J."/>
            <person name="Sullivan S.A."/>
            <person name="Khouri H."/>
            <person name="Dimitrov G.I."/>
            <person name="Watkins K.L."/>
            <person name="Mulligan S."/>
            <person name="Benton J."/>
            <person name="Radune D."/>
            <person name="Fisher D.J."/>
            <person name="Atkins H.S."/>
            <person name="Hiscox T."/>
            <person name="Jost B.H."/>
            <person name="Billington S.J."/>
            <person name="Songer J.G."/>
            <person name="McClane B.A."/>
            <person name="Titball R.W."/>
            <person name="Rood J.I."/>
            <person name="Melville S.B."/>
            <person name="Paulsen I.T."/>
        </authorList>
    </citation>
    <scope>NUCLEOTIDE SEQUENCE [LARGE SCALE GENOMIC DNA]</scope>
    <source>
        <strain>SM101 / Type A</strain>
    </source>
</reference>
<comment type="function">
    <text evidence="1">F(1)F(0) ATP synthase produces ATP from ADP in the presence of a proton or sodium gradient. F-type ATPases consist of two structural domains, F(1) containing the extramembraneous catalytic core and F(0) containing the membrane proton channel, linked together by a central stalk and a peripheral stalk. During catalysis, ATP synthesis in the catalytic domain of F(1) is coupled via a rotary mechanism of the central stalk subunits to proton translocation.</text>
</comment>
<comment type="function">
    <text evidence="1">This protein is part of the stalk that links CF(0) to CF(1). It either transmits conformational changes from CF(0) to CF(1) or is implicated in proton conduction.</text>
</comment>
<comment type="subunit">
    <text evidence="1">F-type ATPases have 2 components, F(1) - the catalytic core - and F(0) - the membrane proton channel. F(1) has five subunits: alpha(3), beta(3), gamma(1), delta(1), epsilon(1). F(0) has three main subunits: a(1), b(2) and c(10-14). The alpha and beta chains form an alternating ring which encloses part of the gamma chain. F(1) is attached to F(0) by a central stalk formed by the gamma and epsilon chains, while a peripheral stalk is formed by the delta and b chains.</text>
</comment>
<comment type="subcellular location">
    <subcellularLocation>
        <location evidence="1">Cell membrane</location>
        <topology evidence="1">Peripheral membrane protein</topology>
    </subcellularLocation>
</comment>
<comment type="similarity">
    <text evidence="1">Belongs to the ATPase delta chain family.</text>
</comment>
<dbReference type="EMBL" id="CP000312">
    <property type="protein sequence ID" value="ABG87280.1"/>
    <property type="molecule type" value="Genomic_DNA"/>
</dbReference>
<dbReference type="RefSeq" id="WP_011592984.1">
    <property type="nucleotide sequence ID" value="NC_008262.1"/>
</dbReference>
<dbReference type="SMR" id="Q0SQZ2"/>
<dbReference type="KEGG" id="cpr:CPR_2165"/>
<dbReference type="Proteomes" id="UP000001824">
    <property type="component" value="Chromosome"/>
</dbReference>
<dbReference type="GO" id="GO:0005886">
    <property type="term" value="C:plasma membrane"/>
    <property type="evidence" value="ECO:0007669"/>
    <property type="project" value="UniProtKB-SubCell"/>
</dbReference>
<dbReference type="GO" id="GO:0045259">
    <property type="term" value="C:proton-transporting ATP synthase complex"/>
    <property type="evidence" value="ECO:0007669"/>
    <property type="project" value="UniProtKB-KW"/>
</dbReference>
<dbReference type="GO" id="GO:0046933">
    <property type="term" value="F:proton-transporting ATP synthase activity, rotational mechanism"/>
    <property type="evidence" value="ECO:0007669"/>
    <property type="project" value="UniProtKB-UniRule"/>
</dbReference>
<dbReference type="Gene3D" id="1.10.520.20">
    <property type="entry name" value="N-terminal domain of the delta subunit of the F1F0-ATP synthase"/>
    <property type="match status" value="1"/>
</dbReference>
<dbReference type="HAMAP" id="MF_01416">
    <property type="entry name" value="ATP_synth_delta_bact"/>
    <property type="match status" value="1"/>
</dbReference>
<dbReference type="InterPro" id="IPR026015">
    <property type="entry name" value="ATP_synth_OSCP/delta_N_sf"/>
</dbReference>
<dbReference type="InterPro" id="IPR020781">
    <property type="entry name" value="ATPase_OSCP/d_CS"/>
</dbReference>
<dbReference type="InterPro" id="IPR000711">
    <property type="entry name" value="ATPase_OSCP/dsu"/>
</dbReference>
<dbReference type="NCBIfam" id="TIGR01145">
    <property type="entry name" value="ATP_synt_delta"/>
    <property type="match status" value="1"/>
</dbReference>
<dbReference type="NCBIfam" id="NF004403">
    <property type="entry name" value="PRK05758.2-4"/>
    <property type="match status" value="1"/>
</dbReference>
<dbReference type="PANTHER" id="PTHR11910">
    <property type="entry name" value="ATP SYNTHASE DELTA CHAIN"/>
    <property type="match status" value="1"/>
</dbReference>
<dbReference type="Pfam" id="PF00213">
    <property type="entry name" value="OSCP"/>
    <property type="match status" value="1"/>
</dbReference>
<dbReference type="PRINTS" id="PR00125">
    <property type="entry name" value="ATPASEDELTA"/>
</dbReference>
<dbReference type="SUPFAM" id="SSF47928">
    <property type="entry name" value="N-terminal domain of the delta subunit of the F1F0-ATP synthase"/>
    <property type="match status" value="1"/>
</dbReference>
<dbReference type="PROSITE" id="PS00389">
    <property type="entry name" value="ATPASE_DELTA"/>
    <property type="match status" value="1"/>
</dbReference>
<evidence type="ECO:0000255" key="1">
    <source>
        <dbReference type="HAMAP-Rule" id="MF_01416"/>
    </source>
</evidence>
<organism>
    <name type="scientific">Clostridium perfringens (strain SM101 / Type A)</name>
    <dbReference type="NCBI Taxonomy" id="289380"/>
    <lineage>
        <taxon>Bacteria</taxon>
        <taxon>Bacillati</taxon>
        <taxon>Bacillota</taxon>
        <taxon>Clostridia</taxon>
        <taxon>Eubacteriales</taxon>
        <taxon>Clostridiaceae</taxon>
        <taxon>Clostridium</taxon>
    </lineage>
</organism>
<accession>Q0SQZ2</accession>